<gene>
    <name evidence="1 4" type="primary">ftsZ2</name>
    <name type="ordered locus">VNG_0192G</name>
</gene>
<comment type="function">
    <text evidence="1 3">Essential cell division protein that forms a contractile ring structure (Z ring) at the future cell division site. The regulation of the ring assembly controls the timing and the location of cell division. One of the functions of the FtsZ ring is to recruit other cell division proteins to the septum to produce a new cell wall between the dividing cells. Binds GTP and shows GTPase activity (By similarity). Essential for triggering the constriction of the cytokinetic ring during exponential growth (PubMed:32788376). Required for normal cell division but not for cell elongation (PubMed:32788376). The CdrSL-FtsZ2 transcriptional network might coordinate cell division timing with cell growth (PubMed:32788376).</text>
</comment>
<comment type="subunit">
    <text evidence="1 3">Homodimer. Polymerizes to form a dynamic ring structure in a strictly GTP-dependent manner. Interacts directly with several other division proteins (By similarity). FtsZ1 and FtsZ2 could also form copolymers whose stoichiometry is balanced by CdrS regulation (PubMed:32788376).</text>
</comment>
<comment type="subcellular location">
    <subcellularLocation>
        <location evidence="1">Cytoplasm</location>
    </subcellularLocation>
    <text evidence="1">Assembles at midcell at the inner surface of the cytoplasmic membrane.</text>
</comment>
<comment type="induction">
    <text evidence="3">Part of the cdrS-ftsZ2 operon (PubMed:32788376). Transcript levels fluctuate depending on the presence of CdrS, growth phase and chemical perturbations, indicating a growth-sensitive mechanism of transcriptional regulation (PubMed:32788376). Transcriptionally regulated by CdrL and CdrS (PubMed:32788376).</text>
</comment>
<comment type="disruption phenotype">
    <text evidence="3">Deletion of the gene does not affect the growth rate but causes drastic increase in cell size together with morphology defects (PubMed:32788376). Division is strongly impaired (PubMed:32788376).</text>
</comment>
<comment type="similarity">
    <text evidence="1">Belongs to the FtsZ family.</text>
</comment>
<comment type="sequence caution" evidence="5">
    <conflict type="erroneous initiation">
        <sequence resource="EMBL-CDS" id="AAG18804"/>
    </conflict>
    <text>Truncated N-terminus.</text>
</comment>
<organism>
    <name type="scientific">Halobacterium salinarum (strain ATCC 700922 / JCM 11081 / NRC-1)</name>
    <name type="common">Halobacterium halobium</name>
    <dbReference type="NCBI Taxonomy" id="64091"/>
    <lineage>
        <taxon>Archaea</taxon>
        <taxon>Methanobacteriati</taxon>
        <taxon>Methanobacteriota</taxon>
        <taxon>Stenosarchaea group</taxon>
        <taxon>Halobacteria</taxon>
        <taxon>Halobacteriales</taxon>
        <taxon>Halobacteriaceae</taxon>
        <taxon>Halobacterium</taxon>
        <taxon>Halobacterium salinarum NRC-34001</taxon>
    </lineage>
</organism>
<proteinExistence type="evidence at protein level"/>
<name>FTSZ2_HALSA</name>
<sequence>MQDIVQDALDNAEAEQREMDGDGDGDEFGDPRIVIVGCGGAGNNTVNRLYNIGVEGADTVAINTDKQHLKMIKADTKILVGKSLTNGLGAGGDPSMGERATEMAQGTIKEVLGDADLVFVTAGMGGGTGTGAAPVVSKIAKEQGAIVVGMVSTPFNVERARTVKAEEGLEKLREKADSIIVLDNNRLLDYVPNLPIGKAFSVMDQIIAETVKGISETITQPSLINLDYADMTAIMNQGGVAVMLVGETQDKNKTNEVVKDAMNHPLLDVDYRGASGGLVHITGGPDLTLKEAEGIADNITERLDASANVIWGARIQESYKGKVRVMAIMTGVQSAQVLGPSTQKQADKSRRELQDVDSKQRAADDAGAGGFGGAHSDGGQDEVEQENGLDVIR</sequence>
<accession>P0DMR7</accession>
<accession>A0A510N478</accession>
<accession>Q48290</accession>
<accession>Q9HSK0</accession>
<evidence type="ECO:0000255" key="1">
    <source>
        <dbReference type="HAMAP-Rule" id="MF_00909"/>
    </source>
</evidence>
<evidence type="ECO:0000256" key="2">
    <source>
        <dbReference type="SAM" id="MobiDB-lite"/>
    </source>
</evidence>
<evidence type="ECO:0000269" key="3">
    <source>
    </source>
</evidence>
<evidence type="ECO:0000303" key="4">
    <source>
    </source>
</evidence>
<evidence type="ECO:0000305" key="5"/>
<evidence type="ECO:0000312" key="6">
    <source>
        <dbReference type="EMBL" id="AAG18804.1"/>
    </source>
</evidence>
<evidence type="ECO:0000312" key="7">
    <source>
        <dbReference type="EMBL" id="DAC77491.1"/>
    </source>
</evidence>
<reference evidence="6" key="1">
    <citation type="journal article" date="2000" name="Proc. Natl. Acad. Sci. U.S.A.">
        <title>Genome sequence of Halobacterium species NRC-1.</title>
        <authorList>
            <person name="Ng W.V."/>
            <person name="Kennedy S.P."/>
            <person name="Mahairas G.G."/>
            <person name="Berquist B."/>
            <person name="Pan M."/>
            <person name="Shukla H.D."/>
            <person name="Lasky S.R."/>
            <person name="Baliga N.S."/>
            <person name="Thorsson V."/>
            <person name="Sbrogna J."/>
            <person name="Swartzell S."/>
            <person name="Weir D."/>
            <person name="Hall J."/>
            <person name="Dahl T.A."/>
            <person name="Welti R."/>
            <person name="Goo Y.A."/>
            <person name="Leithauser B."/>
            <person name="Keller K."/>
            <person name="Cruz R."/>
            <person name="Danson M.J."/>
            <person name="Hough D.W."/>
            <person name="Maddocks D.G."/>
            <person name="Jablonski P.E."/>
            <person name="Krebs M.P."/>
            <person name="Angevine C.M."/>
            <person name="Dale H."/>
            <person name="Isenbarger T.A."/>
            <person name="Peck R.F."/>
            <person name="Pohlschroder M."/>
            <person name="Spudich J.L."/>
            <person name="Jung K.-H."/>
            <person name="Alam M."/>
            <person name="Freitas T."/>
            <person name="Hou S."/>
            <person name="Daniels C.J."/>
            <person name="Dennis P.P."/>
            <person name="Omer A.D."/>
            <person name="Ebhardt H."/>
            <person name="Lowe T.M."/>
            <person name="Liang P."/>
            <person name="Riley M."/>
            <person name="Hood L."/>
            <person name="DasSarma S."/>
        </authorList>
    </citation>
    <scope>NUCLEOTIDE SEQUENCE [LARGE SCALE GENOMIC DNA]</scope>
    <source>
        <strain>ATCC 700922 / JCM 11081 / NRC-1</strain>
    </source>
</reference>
<reference evidence="7" key="2">
    <citation type="journal article" date="2019" name="Microbiol. Resour. Announc.">
        <title>The Genome Sequence of the Halobacterium salinarum Type Strain Is Closely Related to That of Laboratory Strains NRC-1 and R1.</title>
        <authorList>
            <person name="Pfeiffer F."/>
            <person name="Marchfelder A."/>
            <person name="Habermann B."/>
            <person name="Dyall-Smith M.L."/>
        </authorList>
    </citation>
    <scope>GENOME REANNOTATION</scope>
    <source>
        <strain>ATCC 700922 / JCM 11081 / NRC-1</strain>
    </source>
</reference>
<reference key="3">
    <citation type="journal article" date="2020" name="MBio">
        <title>The Ribbon-Helix-Helix Domain Protein CdrS Regulates the Tubulin Homolog ftsZ2 To Control Cell Division in Archaea.</title>
        <authorList>
            <person name="Darnell C.L."/>
            <person name="Zheng J."/>
            <person name="Wilson S."/>
            <person name="Bertoli R.M."/>
            <person name="Bisson-Filho A.W."/>
            <person name="Garner E.C."/>
            <person name="Schmid A.K."/>
        </authorList>
    </citation>
    <scope>FUNCTION</scope>
    <scope>SUBUNIT</scope>
    <scope>INDUCTION</scope>
    <scope>DISRUPTION PHENOTYPE</scope>
    <source>
        <strain>ATCC 700922 / JCM 11081 / NRC-1</strain>
    </source>
</reference>
<dbReference type="EMBL" id="AE004437">
    <property type="protein sequence ID" value="AAG18804.1"/>
    <property type="status" value="ALT_INIT"/>
    <property type="molecule type" value="Genomic_DNA"/>
</dbReference>
<dbReference type="EMBL" id="BK010829">
    <property type="protein sequence ID" value="DAC77491.1"/>
    <property type="molecule type" value="Genomic_DNA"/>
</dbReference>
<dbReference type="PIR" id="H84179">
    <property type="entry name" value="H84179"/>
</dbReference>
<dbReference type="PIR" id="T44848">
    <property type="entry name" value="T44848"/>
</dbReference>
<dbReference type="SMR" id="P0DMR7"/>
<dbReference type="FunCoup" id="P0DMR7">
    <property type="interactions" value="51"/>
</dbReference>
<dbReference type="STRING" id="64091.VNG_0192G"/>
<dbReference type="PaxDb" id="64091-VNG_0192G"/>
<dbReference type="KEGG" id="hal:VNG_0192G"/>
<dbReference type="PATRIC" id="fig|64091.14.peg.141"/>
<dbReference type="HOGENOM" id="CLU_024865_0_1_2"/>
<dbReference type="InParanoid" id="P0DMR7"/>
<dbReference type="OrthoDB" id="371908at2157"/>
<dbReference type="PhylomeDB" id="P0DMR7"/>
<dbReference type="Proteomes" id="UP000000554">
    <property type="component" value="Chromosome"/>
</dbReference>
<dbReference type="GO" id="GO:0032153">
    <property type="term" value="C:cell division site"/>
    <property type="evidence" value="ECO:0000318"/>
    <property type="project" value="GO_Central"/>
</dbReference>
<dbReference type="GO" id="GO:0005737">
    <property type="term" value="C:cytoplasm"/>
    <property type="evidence" value="ECO:0000318"/>
    <property type="project" value="GO_Central"/>
</dbReference>
<dbReference type="GO" id="GO:0005525">
    <property type="term" value="F:GTP binding"/>
    <property type="evidence" value="ECO:0000318"/>
    <property type="project" value="GO_Central"/>
</dbReference>
<dbReference type="GO" id="GO:0003924">
    <property type="term" value="F:GTPase activity"/>
    <property type="evidence" value="ECO:0000318"/>
    <property type="project" value="GO_Central"/>
</dbReference>
<dbReference type="GO" id="GO:0051301">
    <property type="term" value="P:cell division"/>
    <property type="evidence" value="ECO:0000318"/>
    <property type="project" value="GO_Central"/>
</dbReference>
<dbReference type="GO" id="GO:0043093">
    <property type="term" value="P:FtsZ-dependent cytokinesis"/>
    <property type="evidence" value="ECO:0007669"/>
    <property type="project" value="UniProtKB-UniRule"/>
</dbReference>
<dbReference type="GO" id="GO:0051258">
    <property type="term" value="P:protein polymerization"/>
    <property type="evidence" value="ECO:0007669"/>
    <property type="project" value="UniProtKB-UniRule"/>
</dbReference>
<dbReference type="CDD" id="cd02201">
    <property type="entry name" value="FtsZ_type1"/>
    <property type="match status" value="1"/>
</dbReference>
<dbReference type="FunFam" id="3.30.1330.20:FF:000008">
    <property type="entry name" value="Cell division protein FtsZ"/>
    <property type="match status" value="1"/>
</dbReference>
<dbReference type="FunFam" id="3.40.50.1440:FF:000014">
    <property type="entry name" value="Cell division protein FtsZ"/>
    <property type="match status" value="1"/>
</dbReference>
<dbReference type="Gene3D" id="3.30.1330.20">
    <property type="entry name" value="Tubulin/FtsZ, C-terminal domain"/>
    <property type="match status" value="1"/>
</dbReference>
<dbReference type="Gene3D" id="3.40.50.1440">
    <property type="entry name" value="Tubulin/FtsZ, GTPase domain"/>
    <property type="match status" value="1"/>
</dbReference>
<dbReference type="HAMAP" id="MF_00909">
    <property type="entry name" value="FtsZ"/>
    <property type="match status" value="1"/>
</dbReference>
<dbReference type="InterPro" id="IPR000158">
    <property type="entry name" value="Cell_div_FtsZ"/>
</dbReference>
<dbReference type="InterPro" id="IPR020805">
    <property type="entry name" value="Cell_div_FtsZ_CS"/>
</dbReference>
<dbReference type="InterPro" id="IPR045061">
    <property type="entry name" value="FtsZ/CetZ"/>
</dbReference>
<dbReference type="InterPro" id="IPR024757">
    <property type="entry name" value="FtsZ_C"/>
</dbReference>
<dbReference type="InterPro" id="IPR008280">
    <property type="entry name" value="Tub_FtsZ_C"/>
</dbReference>
<dbReference type="InterPro" id="IPR037103">
    <property type="entry name" value="Tubulin/FtsZ-like_C"/>
</dbReference>
<dbReference type="InterPro" id="IPR018316">
    <property type="entry name" value="Tubulin/FtsZ_2-layer-sand-dom"/>
</dbReference>
<dbReference type="InterPro" id="IPR036525">
    <property type="entry name" value="Tubulin/FtsZ_GTPase_sf"/>
</dbReference>
<dbReference type="InterPro" id="IPR003008">
    <property type="entry name" value="Tubulin_FtsZ_GTPase"/>
</dbReference>
<dbReference type="NCBIfam" id="TIGR00065">
    <property type="entry name" value="ftsZ"/>
    <property type="match status" value="1"/>
</dbReference>
<dbReference type="PANTHER" id="PTHR30314:SF9">
    <property type="entry name" value="CELL DIVISION PROTEIN FTSZ 2"/>
    <property type="match status" value="1"/>
</dbReference>
<dbReference type="PANTHER" id="PTHR30314">
    <property type="entry name" value="CELL DIVISION PROTEIN FTSZ-RELATED"/>
    <property type="match status" value="1"/>
</dbReference>
<dbReference type="Pfam" id="PF12327">
    <property type="entry name" value="FtsZ_C"/>
    <property type="match status" value="1"/>
</dbReference>
<dbReference type="Pfam" id="PF00091">
    <property type="entry name" value="Tubulin"/>
    <property type="match status" value="1"/>
</dbReference>
<dbReference type="PRINTS" id="PR00423">
    <property type="entry name" value="CELLDVISFTSZ"/>
</dbReference>
<dbReference type="SMART" id="SM00864">
    <property type="entry name" value="Tubulin"/>
    <property type="match status" value="1"/>
</dbReference>
<dbReference type="SMART" id="SM00865">
    <property type="entry name" value="Tubulin_C"/>
    <property type="match status" value="1"/>
</dbReference>
<dbReference type="SUPFAM" id="SSF55307">
    <property type="entry name" value="Tubulin C-terminal domain-like"/>
    <property type="match status" value="1"/>
</dbReference>
<dbReference type="SUPFAM" id="SSF52490">
    <property type="entry name" value="Tubulin nucleotide-binding domain-like"/>
    <property type="match status" value="1"/>
</dbReference>
<dbReference type="PROSITE" id="PS01134">
    <property type="entry name" value="FTSZ_1"/>
    <property type="match status" value="1"/>
</dbReference>
<dbReference type="PROSITE" id="PS01135">
    <property type="entry name" value="FTSZ_2"/>
    <property type="match status" value="1"/>
</dbReference>
<protein>
    <recommendedName>
        <fullName evidence="1">Cell division protein FtsZ 2</fullName>
    </recommendedName>
</protein>
<keyword id="KW-0131">Cell cycle</keyword>
<keyword id="KW-0132">Cell division</keyword>
<keyword id="KW-0963">Cytoplasm</keyword>
<keyword id="KW-0342">GTP-binding</keyword>
<keyword id="KW-0547">Nucleotide-binding</keyword>
<keyword id="KW-1185">Reference proteome</keyword>
<keyword id="KW-0717">Septation</keyword>
<feature type="chain" id="PRO_0000114399" description="Cell division protein FtsZ 2">
    <location>
        <begin position="1"/>
        <end position="393"/>
    </location>
</feature>
<feature type="region of interest" description="Disordered" evidence="2">
    <location>
        <begin position="1"/>
        <end position="28"/>
    </location>
</feature>
<feature type="region of interest" description="Disordered" evidence="2">
    <location>
        <begin position="339"/>
        <end position="393"/>
    </location>
</feature>
<feature type="compositionally biased region" description="Basic and acidic residues" evidence="2">
    <location>
        <begin position="345"/>
        <end position="364"/>
    </location>
</feature>
<feature type="compositionally biased region" description="Gly residues" evidence="2">
    <location>
        <begin position="367"/>
        <end position="376"/>
    </location>
</feature>
<feature type="binding site" evidence="1">
    <location>
        <begin position="40"/>
        <end position="44"/>
    </location>
    <ligand>
        <name>GTP</name>
        <dbReference type="ChEBI" id="CHEBI:37565"/>
    </ligand>
</feature>
<feature type="binding site" evidence="1">
    <location>
        <begin position="127"/>
        <end position="129"/>
    </location>
    <ligand>
        <name>GTP</name>
        <dbReference type="ChEBI" id="CHEBI:37565"/>
    </ligand>
</feature>
<feature type="binding site" evidence="1">
    <location>
        <position position="158"/>
    </location>
    <ligand>
        <name>GTP</name>
        <dbReference type="ChEBI" id="CHEBI:37565"/>
    </ligand>
</feature>
<feature type="binding site" evidence="1">
    <location>
        <position position="161"/>
    </location>
    <ligand>
        <name>GTP</name>
        <dbReference type="ChEBI" id="CHEBI:37565"/>
    </ligand>
</feature>
<feature type="binding site" evidence="1">
    <location>
        <position position="204"/>
    </location>
    <ligand>
        <name>GTP</name>
        <dbReference type="ChEBI" id="CHEBI:37565"/>
    </ligand>
</feature>